<comment type="function">
    <text evidence="2">B-lymphocyte-specific membrane protein that plays a role in the regulation of cellular calcium influx necessary for the development, differentiation, and activation of B-lymphocytes. Functions as a store-operated calcium (SOC) channel component promoting calcium influx after activation by the B-cell receptor/BCR.</text>
</comment>
<comment type="subunit">
    <text evidence="2 6">Forms homotetramers. Interacts with the heavy and light chains of cell surface IgM, the antigen-binding components of the BCR.</text>
</comment>
<comment type="subcellular location">
    <subcellularLocation>
        <location evidence="2">Cell membrane</location>
        <topology evidence="2">Multi-pass membrane protein</topology>
    </subcellularLocation>
    <subcellularLocation>
        <location evidence="2">Cell membrane</location>
        <topology evidence="2">Lipid-anchor</topology>
    </subcellularLocation>
    <text evidence="2">Constitutively associated with membrane rafts.</text>
</comment>
<comment type="PTM">
    <text evidence="1">Phosphorylated.</text>
</comment>
<comment type="disruption phenotype">
    <text evidence="5 6">Mice have severely impaired T-cell independent antipolysaccharide antibody responses (PubMed:20038800). B-cell development is predominantly normal in CD20-deficient mice but calcium influx following CD19 or IgM ligation is reduced (PubMed:8450218).</text>
</comment>
<comment type="similarity">
    <text evidence="7">Belongs to the MS4A family.</text>
</comment>
<dbReference type="EMBL" id="M62541">
    <property type="protein sequence ID" value="AAA37394.1"/>
    <property type="molecule type" value="mRNA"/>
</dbReference>
<dbReference type="EMBL" id="AK017903">
    <property type="protein sequence ID" value="BAB30996.1"/>
    <property type="molecule type" value="mRNA"/>
</dbReference>
<dbReference type="EMBL" id="BC028322">
    <property type="protein sequence ID" value="AAH28322.1"/>
    <property type="molecule type" value="mRNA"/>
</dbReference>
<dbReference type="CCDS" id="CCDS37923.1"/>
<dbReference type="PIR" id="A30558">
    <property type="entry name" value="A30558"/>
</dbReference>
<dbReference type="RefSeq" id="NP_031667.1">
    <property type="nucleotide sequence ID" value="NM_007641.6"/>
</dbReference>
<dbReference type="SMR" id="P19437"/>
<dbReference type="BioGRID" id="198580">
    <property type="interactions" value="2"/>
</dbReference>
<dbReference type="FunCoup" id="P19437">
    <property type="interactions" value="245"/>
</dbReference>
<dbReference type="IntAct" id="P19437">
    <property type="interactions" value="2"/>
</dbReference>
<dbReference type="STRING" id="10090.ENSMUSP00000126422"/>
<dbReference type="GlyGen" id="P19437">
    <property type="glycosylation" value="1 site"/>
</dbReference>
<dbReference type="iPTMnet" id="P19437"/>
<dbReference type="PhosphoSitePlus" id="P19437"/>
<dbReference type="jPOST" id="P19437"/>
<dbReference type="PaxDb" id="10090-ENSMUSP00000126422"/>
<dbReference type="ProteomicsDB" id="281263"/>
<dbReference type="Antibodypedia" id="3497">
    <property type="antibodies" value="4678 antibodies from 62 providers"/>
</dbReference>
<dbReference type="DNASU" id="12482"/>
<dbReference type="Ensembl" id="ENSMUST00000169159.3">
    <property type="protein sequence ID" value="ENSMUSP00000126422.2"/>
    <property type="gene ID" value="ENSMUSG00000024673.10"/>
</dbReference>
<dbReference type="GeneID" id="12482"/>
<dbReference type="KEGG" id="mmu:12482"/>
<dbReference type="UCSC" id="uc008grw.1">
    <property type="organism name" value="mouse"/>
</dbReference>
<dbReference type="AGR" id="MGI:88321"/>
<dbReference type="CTD" id="931"/>
<dbReference type="MGI" id="MGI:88321">
    <property type="gene designation" value="Ms4a1"/>
</dbReference>
<dbReference type="VEuPathDB" id="HostDB:ENSMUSG00000024673"/>
<dbReference type="eggNOG" id="ENOG502S6Z3">
    <property type="taxonomic scope" value="Eukaryota"/>
</dbReference>
<dbReference type="GeneTree" id="ENSGT00510000048781"/>
<dbReference type="HOGENOM" id="CLU_082137_0_0_1"/>
<dbReference type="InParanoid" id="P19437"/>
<dbReference type="OMA" id="HFFKMES"/>
<dbReference type="OrthoDB" id="9426701at2759"/>
<dbReference type="PhylomeDB" id="P19437"/>
<dbReference type="TreeFam" id="TF335157"/>
<dbReference type="BioGRID-ORCS" id="12482">
    <property type="hits" value="2 hits in 77 CRISPR screens"/>
</dbReference>
<dbReference type="ChiTaRS" id="Ms4a1">
    <property type="organism name" value="mouse"/>
</dbReference>
<dbReference type="PRO" id="PR:P19437"/>
<dbReference type="Proteomes" id="UP000000589">
    <property type="component" value="Chromosome 19"/>
</dbReference>
<dbReference type="RNAct" id="P19437">
    <property type="molecule type" value="protein"/>
</dbReference>
<dbReference type="Bgee" id="ENSMUSG00000024673">
    <property type="expression patterns" value="Expressed in peripheral lymph node and 101 other cell types or tissues"/>
</dbReference>
<dbReference type="ExpressionAtlas" id="P19437">
    <property type="expression patterns" value="baseline and differential"/>
</dbReference>
<dbReference type="GO" id="GO:0009897">
    <property type="term" value="C:external side of plasma membrane"/>
    <property type="evidence" value="ECO:0000314"/>
    <property type="project" value="MGI"/>
</dbReference>
<dbReference type="GO" id="GO:0005654">
    <property type="term" value="C:nucleoplasm"/>
    <property type="evidence" value="ECO:0007669"/>
    <property type="project" value="Ensembl"/>
</dbReference>
<dbReference type="GO" id="GO:0044853">
    <property type="term" value="C:plasma membrane raft"/>
    <property type="evidence" value="ECO:0007669"/>
    <property type="project" value="Ensembl"/>
</dbReference>
<dbReference type="GO" id="GO:0005154">
    <property type="term" value="F:epidermal growth factor receptor binding"/>
    <property type="evidence" value="ECO:0007669"/>
    <property type="project" value="Ensembl"/>
</dbReference>
<dbReference type="GO" id="GO:0042802">
    <property type="term" value="F:identical protein binding"/>
    <property type="evidence" value="ECO:0007669"/>
    <property type="project" value="Ensembl"/>
</dbReference>
<dbReference type="GO" id="GO:0019865">
    <property type="term" value="F:immunoglobulin binding"/>
    <property type="evidence" value="ECO:0007669"/>
    <property type="project" value="Ensembl"/>
</dbReference>
<dbReference type="GO" id="GO:0030183">
    <property type="term" value="P:B cell differentiation"/>
    <property type="evidence" value="ECO:0007669"/>
    <property type="project" value="Ensembl"/>
</dbReference>
<dbReference type="GO" id="GO:0050853">
    <property type="term" value="P:B cell receptor signaling pathway"/>
    <property type="evidence" value="ECO:0007669"/>
    <property type="project" value="Ensembl"/>
</dbReference>
<dbReference type="GO" id="GO:1902656">
    <property type="term" value="P:calcium ion import into cytosol"/>
    <property type="evidence" value="ECO:0007669"/>
    <property type="project" value="Ensembl"/>
</dbReference>
<dbReference type="GO" id="GO:1905665">
    <property type="term" value="P:positive regulation of calcium ion import across plasma membrane"/>
    <property type="evidence" value="ECO:0000314"/>
    <property type="project" value="UniProtKB"/>
</dbReference>
<dbReference type="GO" id="GO:0051262">
    <property type="term" value="P:protein tetramerization"/>
    <property type="evidence" value="ECO:0007669"/>
    <property type="project" value="Ensembl"/>
</dbReference>
<dbReference type="GO" id="GO:0009617">
    <property type="term" value="P:response to bacterium"/>
    <property type="evidence" value="ECO:0000270"/>
    <property type="project" value="MGI"/>
</dbReference>
<dbReference type="GO" id="GO:0002115">
    <property type="term" value="P:store-operated calcium entry"/>
    <property type="evidence" value="ECO:0007669"/>
    <property type="project" value="Ensembl"/>
</dbReference>
<dbReference type="InterPro" id="IPR007237">
    <property type="entry name" value="CD20-like"/>
</dbReference>
<dbReference type="InterPro" id="IPR030417">
    <property type="entry name" value="MS4A"/>
</dbReference>
<dbReference type="PANTHER" id="PTHR23320:SF79">
    <property type="entry name" value="B-LYMPHOCYTE ANTIGEN CD20"/>
    <property type="match status" value="1"/>
</dbReference>
<dbReference type="PANTHER" id="PTHR23320">
    <property type="entry name" value="MEMBRANE-SPANNING 4-DOMAINS SUBFAMILY A MS4A -RELATED"/>
    <property type="match status" value="1"/>
</dbReference>
<dbReference type="Pfam" id="PF04103">
    <property type="entry name" value="CD20"/>
    <property type="match status" value="1"/>
</dbReference>
<keyword id="KW-0075">B-cell activation</keyword>
<keyword id="KW-1003">Cell membrane</keyword>
<keyword id="KW-0449">Lipoprotein</keyword>
<keyword id="KW-0472">Membrane</keyword>
<keyword id="KW-0564">Palmitate</keyword>
<keyword id="KW-0597">Phosphoprotein</keyword>
<keyword id="KW-1185">Reference proteome</keyword>
<keyword id="KW-0812">Transmembrane</keyword>
<keyword id="KW-1133">Transmembrane helix</keyword>
<gene>
    <name type="primary">Ms4a1</name>
    <name type="synonym">Cd20</name>
    <name type="synonym">Ly-44</name>
    <name type="synonym">Ms4a2</name>
</gene>
<reference key="1">
    <citation type="journal article" date="1988" name="J. Immunol.">
        <title>Cloning of a complementary DNA encoding a new mouse B lymphocyte differentiation antigen, homologous to the human B1 (CD20) antigen, and localization of the gene to chromosome 19.</title>
        <authorList>
            <person name="Tedder T.F."/>
            <person name="Klejman G."/>
            <person name="Disteche C.M."/>
            <person name="Adler D.A."/>
            <person name="Schlossman S.F."/>
            <person name="Saito H."/>
        </authorList>
    </citation>
    <scope>NUCLEOTIDE SEQUENCE [MRNA]</scope>
</reference>
<reference key="2">
    <citation type="journal article" date="2005" name="Science">
        <title>The transcriptional landscape of the mammalian genome.</title>
        <authorList>
            <person name="Carninci P."/>
            <person name="Kasukawa T."/>
            <person name="Katayama S."/>
            <person name="Gough J."/>
            <person name="Frith M.C."/>
            <person name="Maeda N."/>
            <person name="Oyama R."/>
            <person name="Ravasi T."/>
            <person name="Lenhard B."/>
            <person name="Wells C."/>
            <person name="Kodzius R."/>
            <person name="Shimokawa K."/>
            <person name="Bajic V.B."/>
            <person name="Brenner S.E."/>
            <person name="Batalov S."/>
            <person name="Forrest A.R."/>
            <person name="Zavolan M."/>
            <person name="Davis M.J."/>
            <person name="Wilming L.G."/>
            <person name="Aidinis V."/>
            <person name="Allen J.E."/>
            <person name="Ambesi-Impiombato A."/>
            <person name="Apweiler R."/>
            <person name="Aturaliya R.N."/>
            <person name="Bailey T.L."/>
            <person name="Bansal M."/>
            <person name="Baxter L."/>
            <person name="Beisel K.W."/>
            <person name="Bersano T."/>
            <person name="Bono H."/>
            <person name="Chalk A.M."/>
            <person name="Chiu K.P."/>
            <person name="Choudhary V."/>
            <person name="Christoffels A."/>
            <person name="Clutterbuck D.R."/>
            <person name="Crowe M.L."/>
            <person name="Dalla E."/>
            <person name="Dalrymple B.P."/>
            <person name="de Bono B."/>
            <person name="Della Gatta G."/>
            <person name="di Bernardo D."/>
            <person name="Down T."/>
            <person name="Engstrom P."/>
            <person name="Fagiolini M."/>
            <person name="Faulkner G."/>
            <person name="Fletcher C.F."/>
            <person name="Fukushima T."/>
            <person name="Furuno M."/>
            <person name="Futaki S."/>
            <person name="Gariboldi M."/>
            <person name="Georgii-Hemming P."/>
            <person name="Gingeras T.R."/>
            <person name="Gojobori T."/>
            <person name="Green R.E."/>
            <person name="Gustincich S."/>
            <person name="Harbers M."/>
            <person name="Hayashi Y."/>
            <person name="Hensch T.K."/>
            <person name="Hirokawa N."/>
            <person name="Hill D."/>
            <person name="Huminiecki L."/>
            <person name="Iacono M."/>
            <person name="Ikeo K."/>
            <person name="Iwama A."/>
            <person name="Ishikawa T."/>
            <person name="Jakt M."/>
            <person name="Kanapin A."/>
            <person name="Katoh M."/>
            <person name="Kawasawa Y."/>
            <person name="Kelso J."/>
            <person name="Kitamura H."/>
            <person name="Kitano H."/>
            <person name="Kollias G."/>
            <person name="Krishnan S.P."/>
            <person name="Kruger A."/>
            <person name="Kummerfeld S.K."/>
            <person name="Kurochkin I.V."/>
            <person name="Lareau L.F."/>
            <person name="Lazarevic D."/>
            <person name="Lipovich L."/>
            <person name="Liu J."/>
            <person name="Liuni S."/>
            <person name="McWilliam S."/>
            <person name="Madan Babu M."/>
            <person name="Madera M."/>
            <person name="Marchionni L."/>
            <person name="Matsuda H."/>
            <person name="Matsuzawa S."/>
            <person name="Miki H."/>
            <person name="Mignone F."/>
            <person name="Miyake S."/>
            <person name="Morris K."/>
            <person name="Mottagui-Tabar S."/>
            <person name="Mulder N."/>
            <person name="Nakano N."/>
            <person name="Nakauchi H."/>
            <person name="Ng P."/>
            <person name="Nilsson R."/>
            <person name="Nishiguchi S."/>
            <person name="Nishikawa S."/>
            <person name="Nori F."/>
            <person name="Ohara O."/>
            <person name="Okazaki Y."/>
            <person name="Orlando V."/>
            <person name="Pang K.C."/>
            <person name="Pavan W.J."/>
            <person name="Pavesi G."/>
            <person name="Pesole G."/>
            <person name="Petrovsky N."/>
            <person name="Piazza S."/>
            <person name="Reed J."/>
            <person name="Reid J.F."/>
            <person name="Ring B.Z."/>
            <person name="Ringwald M."/>
            <person name="Rost B."/>
            <person name="Ruan Y."/>
            <person name="Salzberg S.L."/>
            <person name="Sandelin A."/>
            <person name="Schneider C."/>
            <person name="Schoenbach C."/>
            <person name="Sekiguchi K."/>
            <person name="Semple C.A."/>
            <person name="Seno S."/>
            <person name="Sessa L."/>
            <person name="Sheng Y."/>
            <person name="Shibata Y."/>
            <person name="Shimada H."/>
            <person name="Shimada K."/>
            <person name="Silva D."/>
            <person name="Sinclair B."/>
            <person name="Sperling S."/>
            <person name="Stupka E."/>
            <person name="Sugiura K."/>
            <person name="Sultana R."/>
            <person name="Takenaka Y."/>
            <person name="Taki K."/>
            <person name="Tammoja K."/>
            <person name="Tan S.L."/>
            <person name="Tang S."/>
            <person name="Taylor M.S."/>
            <person name="Tegner J."/>
            <person name="Teichmann S.A."/>
            <person name="Ueda H.R."/>
            <person name="van Nimwegen E."/>
            <person name="Verardo R."/>
            <person name="Wei C.L."/>
            <person name="Yagi K."/>
            <person name="Yamanishi H."/>
            <person name="Zabarovsky E."/>
            <person name="Zhu S."/>
            <person name="Zimmer A."/>
            <person name="Hide W."/>
            <person name="Bult C."/>
            <person name="Grimmond S.M."/>
            <person name="Teasdale R.D."/>
            <person name="Liu E.T."/>
            <person name="Brusic V."/>
            <person name="Quackenbush J."/>
            <person name="Wahlestedt C."/>
            <person name="Mattick J.S."/>
            <person name="Hume D.A."/>
            <person name="Kai C."/>
            <person name="Sasaki D."/>
            <person name="Tomaru Y."/>
            <person name="Fukuda S."/>
            <person name="Kanamori-Katayama M."/>
            <person name="Suzuki M."/>
            <person name="Aoki J."/>
            <person name="Arakawa T."/>
            <person name="Iida J."/>
            <person name="Imamura K."/>
            <person name="Itoh M."/>
            <person name="Kato T."/>
            <person name="Kawaji H."/>
            <person name="Kawagashira N."/>
            <person name="Kawashima T."/>
            <person name="Kojima M."/>
            <person name="Kondo S."/>
            <person name="Konno H."/>
            <person name="Nakano K."/>
            <person name="Ninomiya N."/>
            <person name="Nishio T."/>
            <person name="Okada M."/>
            <person name="Plessy C."/>
            <person name="Shibata K."/>
            <person name="Shiraki T."/>
            <person name="Suzuki S."/>
            <person name="Tagami M."/>
            <person name="Waki K."/>
            <person name="Watahiki A."/>
            <person name="Okamura-Oho Y."/>
            <person name="Suzuki H."/>
            <person name="Kawai J."/>
            <person name="Hayashizaki Y."/>
        </authorList>
    </citation>
    <scope>NUCLEOTIDE SEQUENCE [LARGE SCALE MRNA]</scope>
    <source>
        <strain>C57BL/6J</strain>
        <tissue>Thymus</tissue>
    </source>
</reference>
<reference key="3">
    <citation type="journal article" date="2004" name="Genome Res.">
        <title>The status, quality, and expansion of the NIH full-length cDNA project: the Mammalian Gene Collection (MGC).</title>
        <authorList>
            <consortium name="The MGC Project Team"/>
        </authorList>
    </citation>
    <scope>NUCLEOTIDE SEQUENCE [LARGE SCALE MRNA]</scope>
    <source>
        <tissue>Retina</tissue>
    </source>
</reference>
<reference key="4">
    <citation type="journal article" date="1993" name="J. Immunol.">
        <title>The oligomeric nature of the murine Fc epsilon RII/CD23. Implications for function.</title>
        <authorList>
            <person name="Dierks S.E."/>
            <person name="Bartlett W.C."/>
            <person name="Edmeades R.L."/>
            <person name="Gould H.J."/>
            <person name="Rao M."/>
            <person name="Conrad D.H."/>
        </authorList>
    </citation>
    <scope>SUBUNIT</scope>
</reference>
<reference key="5">
    <citation type="journal article" date="2004" name="Int. Immunol.">
        <title>Mouse CD20 expression and function.</title>
        <authorList>
            <person name="Uchida J."/>
            <person name="Lee Y."/>
            <person name="Hasegawa M."/>
            <person name="Liang Y."/>
            <person name="Bradney A."/>
            <person name="Oliver J.A."/>
            <person name="Bowen K."/>
            <person name="Steeber D.A."/>
            <person name="Haas K.M."/>
            <person name="Poe J.C."/>
            <person name="Tedder T.F."/>
        </authorList>
    </citation>
    <scope>DISRUPTION PHENOTYPE</scope>
    <scope>FUNCTION</scope>
</reference>
<reference key="6">
    <citation type="journal article" date="2010" name="Cell">
        <title>A tissue-specific atlas of mouse protein phosphorylation and expression.</title>
        <authorList>
            <person name="Huttlin E.L."/>
            <person name="Jedrychowski M.P."/>
            <person name="Elias J.E."/>
            <person name="Goswami T."/>
            <person name="Rad R."/>
            <person name="Beausoleil S.A."/>
            <person name="Villen J."/>
            <person name="Haas W."/>
            <person name="Sowa M.E."/>
            <person name="Gygi S.P."/>
        </authorList>
    </citation>
    <scope>PHOSPHORYLATION [LARGE SCALE ANALYSIS] AT SER-29; SER-219 AND THR-233</scope>
    <scope>IDENTIFICATION BY MASS SPECTROMETRY [LARGE SCALE ANALYSIS]</scope>
    <source>
        <tissue>Lung</tissue>
        <tissue>Pancreas</tissue>
        <tissue>Spleen</tissue>
    </source>
</reference>
<reference key="7">
    <citation type="journal article" date="2010" name="J. Clin. Invest.">
        <title>CD20 deficiency in humans results in impaired T cell-independent antibody responses.</title>
        <authorList>
            <person name="Kuijpers T.W."/>
            <person name="Bende R.J."/>
            <person name="Baars P.A."/>
            <person name="Grummels A."/>
            <person name="Derks I.A.M."/>
            <person name="Dolman K.M."/>
            <person name="Beaumont T."/>
            <person name="Tedder T.F."/>
            <person name="van Noesel C.J.M."/>
            <person name="Eldering E."/>
            <person name="van Lier R.A.W."/>
        </authorList>
    </citation>
    <scope>DISRUPTION PHENOTYPE</scope>
</reference>
<evidence type="ECO:0000250" key="1"/>
<evidence type="ECO:0000250" key="2">
    <source>
        <dbReference type="UniProtKB" id="P11836"/>
    </source>
</evidence>
<evidence type="ECO:0000255" key="3"/>
<evidence type="ECO:0000256" key="4">
    <source>
        <dbReference type="SAM" id="MobiDB-lite"/>
    </source>
</evidence>
<evidence type="ECO:0000269" key="5">
    <source>
    </source>
</evidence>
<evidence type="ECO:0000269" key="6">
    <source>
    </source>
</evidence>
<evidence type="ECO:0000305" key="7"/>
<evidence type="ECO:0007744" key="8">
    <source>
    </source>
</evidence>
<sequence length="291" mass="31958">MSGPFPAEPTKGPLAMQPAPKVNLKRTSSLVGPTQSFFMRESKALGAVQIMNGLFHITLGGLLMIPTGVFAPICLSVWYPLWGGIMYIISGSLLAAAAEKTSRKSLVKAKVIMSSLSLFAAISGIILSIMDILNMTLSHFLKMRRLELIQTSKPYVDIYDCEPSNSSEKNSPSTQYCNSIQSVFLGILSAMLISAFFQKLVTAGIVENEWKRMCTRSKSNVVLLSAGEKNEQTIKMKEEIIELSGVSSQPKNEEEIEIIPVQEEEEEEAEINFPAPPQEQESLPVENEIAP</sequence>
<accession>P19437</accession>
<name>CD20_MOUSE</name>
<protein>
    <recommendedName>
        <fullName>B-lymphocyte antigen CD20</fullName>
    </recommendedName>
    <alternativeName>
        <fullName>B-cell differentiation antigen Ly-44</fullName>
    </alternativeName>
    <alternativeName>
        <fullName>Lymphocyte antigen 44</fullName>
    </alternativeName>
    <alternativeName>
        <fullName>Membrane-spanning 4-domains subfamily A member 1</fullName>
    </alternativeName>
    <cdAntigenName>CD20</cdAntigenName>
</protein>
<organism>
    <name type="scientific">Mus musculus</name>
    <name type="common">Mouse</name>
    <dbReference type="NCBI Taxonomy" id="10090"/>
    <lineage>
        <taxon>Eukaryota</taxon>
        <taxon>Metazoa</taxon>
        <taxon>Chordata</taxon>
        <taxon>Craniata</taxon>
        <taxon>Vertebrata</taxon>
        <taxon>Euteleostomi</taxon>
        <taxon>Mammalia</taxon>
        <taxon>Eutheria</taxon>
        <taxon>Euarchontoglires</taxon>
        <taxon>Glires</taxon>
        <taxon>Rodentia</taxon>
        <taxon>Myomorpha</taxon>
        <taxon>Muroidea</taxon>
        <taxon>Muridae</taxon>
        <taxon>Murinae</taxon>
        <taxon>Mus</taxon>
        <taxon>Mus</taxon>
    </lineage>
</organism>
<feature type="chain" id="PRO_0000158628" description="B-lymphocyte antigen CD20">
    <location>
        <begin position="1"/>
        <end position="291"/>
    </location>
</feature>
<feature type="topological domain" description="Cytoplasmic" evidence="3">
    <location>
        <begin position="1"/>
        <end position="44"/>
    </location>
</feature>
<feature type="transmembrane region" description="Helical" evidence="3">
    <location>
        <begin position="45"/>
        <end position="65"/>
    </location>
</feature>
<feature type="topological domain" description="Extracellular" evidence="3">
    <location>
        <begin position="66"/>
        <end position="68"/>
    </location>
</feature>
<feature type="transmembrane region" description="Helical" evidence="3">
    <location>
        <begin position="69"/>
        <end position="89"/>
    </location>
</feature>
<feature type="topological domain" description="Cytoplasmic" evidence="3">
    <location>
        <begin position="90"/>
        <end position="111"/>
    </location>
</feature>
<feature type="transmembrane region" description="Helical" evidence="3">
    <location>
        <begin position="112"/>
        <end position="132"/>
    </location>
</feature>
<feature type="topological domain" description="Extracellular" evidence="3">
    <location>
        <begin position="133"/>
        <end position="182"/>
    </location>
</feature>
<feature type="transmembrane region" description="Helical" evidence="3">
    <location>
        <begin position="183"/>
        <end position="203"/>
    </location>
</feature>
<feature type="topological domain" description="Cytoplasmic" evidence="3">
    <location>
        <begin position="204"/>
        <end position="291"/>
    </location>
</feature>
<feature type="region of interest" description="Disordered" evidence="4">
    <location>
        <begin position="261"/>
        <end position="291"/>
    </location>
</feature>
<feature type="compositionally biased region" description="Acidic residues" evidence="4">
    <location>
        <begin position="261"/>
        <end position="270"/>
    </location>
</feature>
<feature type="modified residue" description="Phosphoserine" evidence="8">
    <location>
        <position position="29"/>
    </location>
</feature>
<feature type="modified residue" description="Phosphoserine" evidence="8">
    <location>
        <position position="219"/>
    </location>
</feature>
<feature type="modified residue" description="Phosphothreonine" evidence="8">
    <location>
        <position position="233"/>
    </location>
</feature>
<feature type="lipid moiety-binding region" description="S-palmitoyl cysteine" evidence="1">
    <location>
        <position position="214"/>
    </location>
</feature>
<proteinExistence type="evidence at protein level"/>